<gene>
    <name evidence="1" type="primary">thrS</name>
    <name type="ordered locus">Deide_06410</name>
</gene>
<comment type="function">
    <text evidence="1">Catalyzes the attachment of threonine to tRNA(Thr) in a two-step reaction: L-threonine is first activated by ATP to form Thr-AMP and then transferred to the acceptor end of tRNA(Thr). Also edits incorrectly charged L-seryl-tRNA(Thr).</text>
</comment>
<comment type="catalytic activity">
    <reaction evidence="1">
        <text>tRNA(Thr) + L-threonine + ATP = L-threonyl-tRNA(Thr) + AMP + diphosphate + H(+)</text>
        <dbReference type="Rhea" id="RHEA:24624"/>
        <dbReference type="Rhea" id="RHEA-COMP:9670"/>
        <dbReference type="Rhea" id="RHEA-COMP:9704"/>
        <dbReference type="ChEBI" id="CHEBI:15378"/>
        <dbReference type="ChEBI" id="CHEBI:30616"/>
        <dbReference type="ChEBI" id="CHEBI:33019"/>
        <dbReference type="ChEBI" id="CHEBI:57926"/>
        <dbReference type="ChEBI" id="CHEBI:78442"/>
        <dbReference type="ChEBI" id="CHEBI:78534"/>
        <dbReference type="ChEBI" id="CHEBI:456215"/>
        <dbReference type="EC" id="6.1.1.3"/>
    </reaction>
</comment>
<comment type="cofactor">
    <cofactor evidence="1">
        <name>Zn(2+)</name>
        <dbReference type="ChEBI" id="CHEBI:29105"/>
    </cofactor>
    <text evidence="1">Binds 1 zinc ion per subunit.</text>
</comment>
<comment type="subunit">
    <text evidence="1">Homodimer.</text>
</comment>
<comment type="subcellular location">
    <subcellularLocation>
        <location evidence="1">Cytoplasm</location>
    </subcellularLocation>
</comment>
<comment type="similarity">
    <text evidence="1">Belongs to the class-II aminoacyl-tRNA synthetase family.</text>
</comment>
<evidence type="ECO:0000255" key="1">
    <source>
        <dbReference type="HAMAP-Rule" id="MF_00184"/>
    </source>
</evidence>
<evidence type="ECO:0000255" key="2">
    <source>
        <dbReference type="PROSITE-ProRule" id="PRU01228"/>
    </source>
</evidence>
<reference key="1">
    <citation type="journal article" date="2009" name="PLoS Genet.">
        <title>Alliance of proteomics and genomics to unravel the specificities of Sahara bacterium Deinococcus deserti.</title>
        <authorList>
            <person name="de Groot A."/>
            <person name="Dulermo R."/>
            <person name="Ortet P."/>
            <person name="Blanchard L."/>
            <person name="Guerin P."/>
            <person name="Fernandez B."/>
            <person name="Vacherie B."/>
            <person name="Dossat C."/>
            <person name="Jolivet E."/>
            <person name="Siguier P."/>
            <person name="Chandler M."/>
            <person name="Barakat M."/>
            <person name="Dedieu A."/>
            <person name="Barbe V."/>
            <person name="Heulin T."/>
            <person name="Sommer S."/>
            <person name="Achouak W."/>
            <person name="Armengaud J."/>
        </authorList>
    </citation>
    <scope>NUCLEOTIDE SEQUENCE [LARGE SCALE GENOMIC DNA]</scope>
    <source>
        <strain>DSM 17065 / CIP 109153 / LMG 22923 / VCD115</strain>
    </source>
</reference>
<name>SYT_DEIDV</name>
<dbReference type="EC" id="6.1.1.3" evidence="1"/>
<dbReference type="EMBL" id="CP001114">
    <property type="protein sequence ID" value="ACO45486.1"/>
    <property type="molecule type" value="Genomic_DNA"/>
</dbReference>
<dbReference type="RefSeq" id="WP_012692609.1">
    <property type="nucleotide sequence ID" value="NC_012526.1"/>
</dbReference>
<dbReference type="SMR" id="C1D0W2"/>
<dbReference type="STRING" id="546414.Deide_06410"/>
<dbReference type="PaxDb" id="546414-Deide_06410"/>
<dbReference type="KEGG" id="ddr:Deide_06410"/>
<dbReference type="eggNOG" id="COG0441">
    <property type="taxonomic scope" value="Bacteria"/>
</dbReference>
<dbReference type="HOGENOM" id="CLU_008554_0_1_0"/>
<dbReference type="OrthoDB" id="9802304at2"/>
<dbReference type="Proteomes" id="UP000002208">
    <property type="component" value="Chromosome"/>
</dbReference>
<dbReference type="GO" id="GO:0005737">
    <property type="term" value="C:cytoplasm"/>
    <property type="evidence" value="ECO:0007669"/>
    <property type="project" value="UniProtKB-SubCell"/>
</dbReference>
<dbReference type="GO" id="GO:0005524">
    <property type="term" value="F:ATP binding"/>
    <property type="evidence" value="ECO:0007669"/>
    <property type="project" value="UniProtKB-UniRule"/>
</dbReference>
<dbReference type="GO" id="GO:0046872">
    <property type="term" value="F:metal ion binding"/>
    <property type="evidence" value="ECO:0007669"/>
    <property type="project" value="UniProtKB-KW"/>
</dbReference>
<dbReference type="GO" id="GO:0004829">
    <property type="term" value="F:threonine-tRNA ligase activity"/>
    <property type="evidence" value="ECO:0007669"/>
    <property type="project" value="UniProtKB-UniRule"/>
</dbReference>
<dbReference type="GO" id="GO:0000049">
    <property type="term" value="F:tRNA binding"/>
    <property type="evidence" value="ECO:0007669"/>
    <property type="project" value="UniProtKB-KW"/>
</dbReference>
<dbReference type="GO" id="GO:0006435">
    <property type="term" value="P:threonyl-tRNA aminoacylation"/>
    <property type="evidence" value="ECO:0007669"/>
    <property type="project" value="UniProtKB-UniRule"/>
</dbReference>
<dbReference type="CDD" id="cd01667">
    <property type="entry name" value="TGS_ThrRS"/>
    <property type="match status" value="1"/>
</dbReference>
<dbReference type="CDD" id="cd00860">
    <property type="entry name" value="ThrRS_anticodon"/>
    <property type="match status" value="1"/>
</dbReference>
<dbReference type="CDD" id="cd00771">
    <property type="entry name" value="ThrRS_core"/>
    <property type="match status" value="1"/>
</dbReference>
<dbReference type="FunFam" id="3.30.930.10:FF:000002">
    <property type="entry name" value="Threonine--tRNA ligase"/>
    <property type="match status" value="1"/>
</dbReference>
<dbReference type="FunFam" id="3.40.50.800:FF:000001">
    <property type="entry name" value="Threonine--tRNA ligase"/>
    <property type="match status" value="1"/>
</dbReference>
<dbReference type="FunFam" id="3.30.980.10:FF:000005">
    <property type="entry name" value="Threonyl-tRNA synthetase, mitochondrial"/>
    <property type="match status" value="1"/>
</dbReference>
<dbReference type="Gene3D" id="3.10.20.30">
    <property type="match status" value="1"/>
</dbReference>
<dbReference type="Gene3D" id="3.30.54.20">
    <property type="match status" value="1"/>
</dbReference>
<dbReference type="Gene3D" id="3.40.50.800">
    <property type="entry name" value="Anticodon-binding domain"/>
    <property type="match status" value="1"/>
</dbReference>
<dbReference type="Gene3D" id="3.30.930.10">
    <property type="entry name" value="Bira Bifunctional Protein, Domain 2"/>
    <property type="match status" value="1"/>
</dbReference>
<dbReference type="Gene3D" id="3.30.980.10">
    <property type="entry name" value="Threonyl-trna Synthetase, Chain A, domain 2"/>
    <property type="match status" value="1"/>
</dbReference>
<dbReference type="HAMAP" id="MF_00184">
    <property type="entry name" value="Thr_tRNA_synth"/>
    <property type="match status" value="1"/>
</dbReference>
<dbReference type="InterPro" id="IPR002314">
    <property type="entry name" value="aa-tRNA-synt_IIb"/>
</dbReference>
<dbReference type="InterPro" id="IPR006195">
    <property type="entry name" value="aa-tRNA-synth_II"/>
</dbReference>
<dbReference type="InterPro" id="IPR045864">
    <property type="entry name" value="aa-tRNA-synth_II/BPL/LPL"/>
</dbReference>
<dbReference type="InterPro" id="IPR004154">
    <property type="entry name" value="Anticodon-bd"/>
</dbReference>
<dbReference type="InterPro" id="IPR036621">
    <property type="entry name" value="Anticodon-bd_dom_sf"/>
</dbReference>
<dbReference type="InterPro" id="IPR012675">
    <property type="entry name" value="Beta-grasp_dom_sf"/>
</dbReference>
<dbReference type="InterPro" id="IPR004095">
    <property type="entry name" value="TGS"/>
</dbReference>
<dbReference type="InterPro" id="IPR012676">
    <property type="entry name" value="TGS-like"/>
</dbReference>
<dbReference type="InterPro" id="IPR002320">
    <property type="entry name" value="Thr-tRNA-ligase_IIa"/>
</dbReference>
<dbReference type="InterPro" id="IPR018163">
    <property type="entry name" value="Thr/Ala-tRNA-synth_IIc_edit"/>
</dbReference>
<dbReference type="InterPro" id="IPR047246">
    <property type="entry name" value="ThrRS_anticodon"/>
</dbReference>
<dbReference type="InterPro" id="IPR033728">
    <property type="entry name" value="ThrRS_core"/>
</dbReference>
<dbReference type="InterPro" id="IPR012947">
    <property type="entry name" value="tRNA_SAD"/>
</dbReference>
<dbReference type="NCBIfam" id="TIGR00418">
    <property type="entry name" value="thrS"/>
    <property type="match status" value="1"/>
</dbReference>
<dbReference type="PANTHER" id="PTHR11451:SF44">
    <property type="entry name" value="THREONINE--TRNA LIGASE, CHLOROPLASTIC_MITOCHONDRIAL 2"/>
    <property type="match status" value="1"/>
</dbReference>
<dbReference type="PANTHER" id="PTHR11451">
    <property type="entry name" value="THREONINE-TRNA LIGASE"/>
    <property type="match status" value="1"/>
</dbReference>
<dbReference type="Pfam" id="PF03129">
    <property type="entry name" value="HGTP_anticodon"/>
    <property type="match status" value="1"/>
</dbReference>
<dbReference type="Pfam" id="PF02824">
    <property type="entry name" value="TGS"/>
    <property type="match status" value="1"/>
</dbReference>
<dbReference type="Pfam" id="PF00587">
    <property type="entry name" value="tRNA-synt_2b"/>
    <property type="match status" value="1"/>
</dbReference>
<dbReference type="Pfam" id="PF07973">
    <property type="entry name" value="tRNA_SAD"/>
    <property type="match status" value="1"/>
</dbReference>
<dbReference type="PRINTS" id="PR01047">
    <property type="entry name" value="TRNASYNTHTHR"/>
</dbReference>
<dbReference type="SMART" id="SM00863">
    <property type="entry name" value="tRNA_SAD"/>
    <property type="match status" value="1"/>
</dbReference>
<dbReference type="SUPFAM" id="SSF52954">
    <property type="entry name" value="Class II aaRS ABD-related"/>
    <property type="match status" value="1"/>
</dbReference>
<dbReference type="SUPFAM" id="SSF55681">
    <property type="entry name" value="Class II aaRS and biotin synthetases"/>
    <property type="match status" value="1"/>
</dbReference>
<dbReference type="SUPFAM" id="SSF81271">
    <property type="entry name" value="TGS-like"/>
    <property type="match status" value="1"/>
</dbReference>
<dbReference type="SUPFAM" id="SSF55186">
    <property type="entry name" value="ThrRS/AlaRS common domain"/>
    <property type="match status" value="1"/>
</dbReference>
<dbReference type="PROSITE" id="PS50862">
    <property type="entry name" value="AA_TRNA_LIGASE_II"/>
    <property type="match status" value="1"/>
</dbReference>
<dbReference type="PROSITE" id="PS51880">
    <property type="entry name" value="TGS"/>
    <property type="match status" value="1"/>
</dbReference>
<keyword id="KW-0030">Aminoacyl-tRNA synthetase</keyword>
<keyword id="KW-0067">ATP-binding</keyword>
<keyword id="KW-0963">Cytoplasm</keyword>
<keyword id="KW-0436">Ligase</keyword>
<keyword id="KW-0479">Metal-binding</keyword>
<keyword id="KW-0547">Nucleotide-binding</keyword>
<keyword id="KW-0648">Protein biosynthesis</keyword>
<keyword id="KW-1185">Reference proteome</keyword>
<keyword id="KW-0694">RNA-binding</keyword>
<keyword id="KW-0820">tRNA-binding</keyword>
<keyword id="KW-0862">Zinc</keyword>
<accession>C1D0W2</accession>
<proteinExistence type="inferred from homology"/>
<feature type="chain" id="PRO_1000203899" description="Threonine--tRNA ligase">
    <location>
        <begin position="1"/>
        <end position="649"/>
    </location>
</feature>
<feature type="domain" description="TGS" evidence="2">
    <location>
        <begin position="1"/>
        <end position="60"/>
    </location>
</feature>
<feature type="region of interest" description="Catalytic" evidence="1">
    <location>
        <begin position="248"/>
        <end position="544"/>
    </location>
</feature>
<feature type="binding site" evidence="1">
    <location>
        <position position="341"/>
    </location>
    <ligand>
        <name>Zn(2+)</name>
        <dbReference type="ChEBI" id="CHEBI:29105"/>
    </ligand>
</feature>
<feature type="binding site" evidence="1">
    <location>
        <position position="392"/>
    </location>
    <ligand>
        <name>Zn(2+)</name>
        <dbReference type="ChEBI" id="CHEBI:29105"/>
    </ligand>
</feature>
<feature type="binding site" evidence="1">
    <location>
        <position position="521"/>
    </location>
    <ligand>
        <name>Zn(2+)</name>
        <dbReference type="ChEBI" id="CHEBI:29105"/>
    </ligand>
</feature>
<protein>
    <recommendedName>
        <fullName evidence="1">Threonine--tRNA ligase</fullName>
        <ecNumber evidence="1">6.1.1.3</ecNumber>
    </recommendedName>
    <alternativeName>
        <fullName evidence="1">Threonyl-tRNA synthetase</fullName>
        <shortName evidence="1">ThrRS</shortName>
    </alternativeName>
</protein>
<organism>
    <name type="scientific">Deinococcus deserti (strain DSM 17065 / CIP 109153 / LMG 22923 / VCD115)</name>
    <dbReference type="NCBI Taxonomy" id="546414"/>
    <lineage>
        <taxon>Bacteria</taxon>
        <taxon>Thermotogati</taxon>
        <taxon>Deinococcota</taxon>
        <taxon>Deinococci</taxon>
        <taxon>Deinococcales</taxon>
        <taxon>Deinococcaceae</taxon>
        <taxon>Deinococcus</taxon>
    </lineage>
</organism>
<sequence length="649" mass="73809">MHVVLPDGKQLELPMGATALDAASAIGPRLAQDALAATANGELVDLMTPLPDGASITLITKKNPGDAAPLFRHSLGHVMSQAVGEYYRAKGYSDDRIKRGVGPSIENGWYQDFDLPEPLREEDLPEIEKIMREILSRNLAFRRREVSKAEGLAQFPHDPYKQELIQGLPDDEPITFYQQGDYVDLCRGPHFPSTGRLPGAFKLMSTSGAYWRGNEKNPILQRVYGVAFASQKELDEYLHQLEEAKRRDHRKLGRELELFTIDPLVGKGLPLWLPNGTVLREELAGFLKEQQFRRGYQGVITPNIGNLELYKTSGHYPYYADGQFNPIEVDDEQYMLKPMNCPHHVRIYASKPRSYRDLPVRLAEFGTVYRYEQSGELNGLTRVRGFTQDDAHLFCRPDQLKKEFLDVLDLTVLVLKTFGMNDVRFRVGTRDPESDKYVGDEANWELAERQILEAVDEVGLPYTIEPGDAAFYGPKLDFVVKDVLGREWQLGTIQVDYNLPERFDISYVGEDGQDHRPIMIHRAPFGSLERFVGILIEHYAGDFPLWLAPRQVMIIPIADRHNEYAEELRSELHAAGLRAEVDDSSNRMQAKVRTAELSKIPVMLIVGDKEQEARQVSVRERSVEGHKERKGVAFDDLCAELLERYRARI</sequence>